<organism>
    <name type="scientific">Claviceps paspali</name>
    <name type="common">Rye ergot fungus</name>
    <dbReference type="NCBI Taxonomy" id="40601"/>
    <lineage>
        <taxon>Eukaryota</taxon>
        <taxon>Fungi</taxon>
        <taxon>Dikarya</taxon>
        <taxon>Ascomycota</taxon>
        <taxon>Pezizomycotina</taxon>
        <taxon>Sordariomycetes</taxon>
        <taxon>Hypocreomycetidae</taxon>
        <taxon>Hypocreales</taxon>
        <taxon>Clavicipitaceae</taxon>
        <taxon>Claviceps</taxon>
    </lineage>
</organism>
<name>IDTC_CLAPA</name>
<accession>J7FJH2</accession>
<proteinExistence type="inferred from homology"/>
<protein>
    <recommendedName>
        <fullName evidence="8">Prenyltransferase idtC</fullName>
        <ecNumber evidence="10">2.5.1.-</ecNumber>
    </recommendedName>
    <alternativeName>
        <fullName evidence="8">Indole-diterpene biosynthesis cluster protein C</fullName>
    </alternativeName>
</protein>
<sequence>MTTLAWFAGRSMVLDLAALTSAFTVGYLLKSTSTPTSTPTSTDKAGTPPGSTIHHYGYPQGSVTKPNNSKTEKENGSPKDSKGNVPDCPYKYLVGLYGHHHFAGFVEALQPTLKDEDPEKYTLVLDIMDAVHLCLILVDDICDDSPKRKNQTTAHLLFGSCETANRAYLVLTKVINRAMRTRPVLGAELVRALELILEGQDLSLVWRRDGLAAFDAEEGGDKVSVYKKMAQLKTGTLFVLLGRLLNDGGAQLDDVLLRLGWYSQLQNDCKNIYSGEYANNKGAIAEDLRNGEMSFPVVVALGDQTTSSQIRKAFGSHSDGDIFDALDALQSSCIKNKCSQALQEAGRGLENLLAIWGRREHMDSLGS</sequence>
<comment type="function">
    <text evidence="5 6 7 10">Prenyltransferase; part of the gene cluster that mediates the biosynthesis of paspalitrems, indole-diterpene (IDT) mycotoxins that are potent tremorgens in mammals (PubMed:23468653, PubMed:29457197, PubMed:32077051). The geranylgeranyl diphosphate (GGPP) synthase idtG is proposed to catalyze the first step in IDT biosynthesis via catalysis of a series of iterative condensations of isopentenyl diphosphate (IPP) with dimethylallyl diphosphate (DMAPP), geranyl diphosphate (GPP), and farnesyl diphosphate (FPP), to form GGPP (Probable). Condensation of indole-3-glycerol phosphate with GGPP by the prenyltransferase idtC then forms 3-geranylgeranylindole (3-GGI) (Probable). Epoxidation of the two terminal alkenes of the geranylgeranyl moiety by the FAD-dependent monooxygenase idtM, and cyclization by the terpene cyclase idtB then leads to the production of paspaline (Probable). The cytochrome P450 monooxygenase idtP then catalyzes oxidative elimination of the pendant methyl group at C-12 of paspaline and generates the C-10 ketone to yield 13-desoxypaxilline (PubMed:32077051). The cytochrome P450 monooxygenase idtQ may catalyze the C-13 oxidation of 13-desoxypaxilline to afford paxilline (Probable). Considering that both paspalicine and paxilline were detected in C.paspali, idtQ also catalyzes the formation of paspalinine from 13-desoxypaxilline via paspalicine as an intermediate (Probable). Finally, the alpha-prenyltransferase idtF prenylates paspalinine at the C-20 or the C-21 positions to yield paspalitrems A and C, respectively (PubMed:32077051). The hydroxylation of paspalitrem A at C-32 by a still unknown oxidase affords paspalitrem B (Probable).</text>
</comment>
<comment type="cofactor">
    <cofactor evidence="1">
        <name>Mg(2+)</name>
        <dbReference type="ChEBI" id="CHEBI:18420"/>
    </cofactor>
    <text evidence="1">Binds 3 Mg(2+) ions per subunit.</text>
</comment>
<comment type="pathway">
    <text evidence="6">Secondary metabolite biosynthesis.</text>
</comment>
<comment type="disruption phenotype">
    <text evidence="6">Simultaneous disruption of idtB, idtC, idtF and idtG eliminates the biosynthesis of the whole spectrum of indole-diterpenes reported to be produced by C.paspali, including paspaline, paxilline, paspalinine, paspalitrem A and paspalitrem B.</text>
</comment>
<comment type="similarity">
    <text evidence="9">Belongs to the FPP/GGPP synthase family.</text>
</comment>
<dbReference type="EC" id="2.5.1.-" evidence="10"/>
<dbReference type="EMBL" id="JN613321">
    <property type="protein sequence ID" value="AFO85422.1"/>
    <property type="molecule type" value="Genomic_DNA"/>
</dbReference>
<dbReference type="SMR" id="J7FJH2"/>
<dbReference type="GlyCosmos" id="J7FJH2">
    <property type="glycosylation" value="2 sites, No reported glycans"/>
</dbReference>
<dbReference type="GO" id="GO:0046872">
    <property type="term" value="F:metal ion binding"/>
    <property type="evidence" value="ECO:0007669"/>
    <property type="project" value="UniProtKB-KW"/>
</dbReference>
<dbReference type="GO" id="GO:0004659">
    <property type="term" value="F:prenyltransferase activity"/>
    <property type="evidence" value="ECO:0007669"/>
    <property type="project" value="InterPro"/>
</dbReference>
<dbReference type="GO" id="GO:0046165">
    <property type="term" value="P:alcohol biosynthetic process"/>
    <property type="evidence" value="ECO:0007669"/>
    <property type="project" value="UniProtKB-ARBA"/>
</dbReference>
<dbReference type="GO" id="GO:0008299">
    <property type="term" value="P:isoprenoid biosynthetic process"/>
    <property type="evidence" value="ECO:0007669"/>
    <property type="project" value="InterPro"/>
</dbReference>
<dbReference type="GO" id="GO:0043386">
    <property type="term" value="P:mycotoxin biosynthetic process"/>
    <property type="evidence" value="ECO:0007669"/>
    <property type="project" value="UniProtKB-ARBA"/>
</dbReference>
<dbReference type="CDD" id="cd00867">
    <property type="entry name" value="Trans_IPPS"/>
    <property type="match status" value="1"/>
</dbReference>
<dbReference type="Gene3D" id="1.10.600.10">
    <property type="entry name" value="Farnesyl Diphosphate Synthase"/>
    <property type="match status" value="1"/>
</dbReference>
<dbReference type="InterPro" id="IPR008949">
    <property type="entry name" value="Isoprenoid_synthase_dom_sf"/>
</dbReference>
<dbReference type="InterPro" id="IPR000092">
    <property type="entry name" value="Polyprenyl_synt"/>
</dbReference>
<dbReference type="PANTHER" id="PTHR12001">
    <property type="entry name" value="GERANYLGERANYL PYROPHOSPHATE SYNTHASE"/>
    <property type="match status" value="1"/>
</dbReference>
<dbReference type="PANTHER" id="PTHR12001:SF72">
    <property type="entry name" value="THIJ_PFPI FAMILY PROTEIN (AFU_ORTHOLOGUE AFUA_3G01210)-RELATED"/>
    <property type="match status" value="1"/>
</dbReference>
<dbReference type="Pfam" id="PF00348">
    <property type="entry name" value="polyprenyl_synt"/>
    <property type="match status" value="1"/>
</dbReference>
<dbReference type="SUPFAM" id="SSF48576">
    <property type="entry name" value="Terpenoid synthases"/>
    <property type="match status" value="1"/>
</dbReference>
<reference key="1">
    <citation type="journal article" date="2013" name="PLoS Genet.">
        <title>Plant-symbiotic fungi as chemical engineers: Multi-genome analysis of the Clavicipitaceae reveals dynamics of alkaloid loci.</title>
        <authorList>
            <person name="Schardl C.L."/>
            <person name="Young C.A."/>
            <person name="Hesse U."/>
            <person name="Amyotte S.G."/>
            <person name="Andreeva K."/>
            <person name="Calie P.J."/>
            <person name="Fleetwood D.J."/>
            <person name="Haws D.C."/>
            <person name="Moore N."/>
            <person name="Oeser B."/>
            <person name="Panaccione D.G."/>
            <person name="Schweri K.K."/>
            <person name="Voisey C.R."/>
            <person name="Farman M.L."/>
            <person name="Jaromczyk J.W."/>
            <person name="Roe B.A."/>
            <person name="O'Sullivan D.M."/>
            <person name="Scott B."/>
            <person name="Tudzynski P."/>
            <person name="An Z."/>
            <person name="Arnaoudova E.G."/>
            <person name="Bullock C.T."/>
            <person name="Charlton N.D."/>
            <person name="Chen L."/>
            <person name="Cox M."/>
            <person name="Dinkins R.D."/>
            <person name="Florea S."/>
            <person name="Glenn A.E."/>
            <person name="Gordon A."/>
            <person name="Gueldener U."/>
            <person name="Harris D.R."/>
            <person name="Hollin W."/>
            <person name="Jaromczyk J."/>
            <person name="Johnson R.D."/>
            <person name="Khan A.K."/>
            <person name="Leistner E."/>
            <person name="Leuchtmann A."/>
            <person name="Li C."/>
            <person name="Liu J."/>
            <person name="Liu J."/>
            <person name="Liu M."/>
            <person name="Mace W."/>
            <person name="Machado C."/>
            <person name="Nagabhyru P."/>
            <person name="Pan J."/>
            <person name="Schmid J."/>
            <person name="Sugawara K."/>
            <person name="Steiner U."/>
            <person name="Takach J.E."/>
            <person name="Tanaka E."/>
            <person name="Webb J.S."/>
            <person name="Wilson E.V."/>
            <person name="Wiseman J.L."/>
            <person name="Yoshida R."/>
            <person name="Zeng Z."/>
        </authorList>
    </citation>
    <scope>NUCLEOTIDE SEQUENCE [GENOMIC DNA]</scope>
    <scope>IDENTIFICATION</scope>
    <scope>FUNCTION</scope>
    <source>
        <strain>RRC-1481</strain>
    </source>
</reference>
<reference key="2">
    <citation type="journal article" date="2018" name="Appl. Microbiol. Biotechnol.">
        <title>Inactivation of the indole-diterpene biosynthetic gene cluster of Claviceps paspali by Agrobacterium-mediated gene replacement.</title>
        <authorList>
            <person name="Kozak L."/>
            <person name="Szilagyi Z."/>
            <person name="Vago B."/>
            <person name="Kakuk A."/>
            <person name="Toth L."/>
            <person name="Molnar I."/>
            <person name="Pocsi I."/>
        </authorList>
    </citation>
    <scope>FUNCTION</scope>
    <scope>DISRUPTION PHENOTYPE</scope>
    <scope>PATHWAY</scope>
</reference>
<reference key="3">
    <citation type="journal article" date="2020" name="Folia Microbiol. (Praha)">
        <title>Functional characterization of the idtF and idtP genes in the Claviceps paspali indole diterpene biosynthetic gene cluster.</title>
        <authorList>
            <person name="Kozak L."/>
            <person name="Szilagyi Z."/>
            <person name="Toth L."/>
            <person name="Pocsi I."/>
            <person name="Molnar I."/>
        </authorList>
    </citation>
    <scope>FUNCTION</scope>
</reference>
<evidence type="ECO:0000250" key="1">
    <source>
        <dbReference type="UniProtKB" id="Q12051"/>
    </source>
</evidence>
<evidence type="ECO:0000255" key="2"/>
<evidence type="ECO:0000255" key="3">
    <source>
        <dbReference type="PROSITE-ProRule" id="PRU00498"/>
    </source>
</evidence>
<evidence type="ECO:0000256" key="4">
    <source>
        <dbReference type="SAM" id="MobiDB-lite"/>
    </source>
</evidence>
<evidence type="ECO:0000269" key="5">
    <source>
    </source>
</evidence>
<evidence type="ECO:0000269" key="6">
    <source>
    </source>
</evidence>
<evidence type="ECO:0000269" key="7">
    <source>
    </source>
</evidence>
<evidence type="ECO:0000303" key="8">
    <source>
    </source>
</evidence>
<evidence type="ECO:0000305" key="9"/>
<evidence type="ECO:0000305" key="10">
    <source>
    </source>
</evidence>
<keyword id="KW-0325">Glycoprotein</keyword>
<keyword id="KW-0460">Magnesium</keyword>
<keyword id="KW-0479">Metal-binding</keyword>
<keyword id="KW-0732">Signal</keyword>
<keyword id="KW-0808">Transferase</keyword>
<feature type="signal peptide" evidence="2">
    <location>
        <begin position="1"/>
        <end position="22"/>
    </location>
</feature>
<feature type="chain" id="PRO_0000451433" description="Prenyltransferase idtC">
    <location>
        <begin position="23"/>
        <end position="367"/>
    </location>
</feature>
<feature type="region of interest" description="Disordered" evidence="4">
    <location>
        <begin position="32"/>
        <end position="84"/>
    </location>
</feature>
<feature type="compositionally biased region" description="Low complexity" evidence="4">
    <location>
        <begin position="32"/>
        <end position="42"/>
    </location>
</feature>
<feature type="compositionally biased region" description="Basic and acidic residues" evidence="4">
    <location>
        <begin position="70"/>
        <end position="82"/>
    </location>
</feature>
<feature type="binding site" evidence="1">
    <location>
        <position position="132"/>
    </location>
    <ligand>
        <name>substrate</name>
    </ligand>
</feature>
<feature type="binding site" evidence="1">
    <location>
        <position position="139"/>
    </location>
    <ligand>
        <name>Mg(2+)</name>
        <dbReference type="ChEBI" id="CHEBI:18420"/>
        <label>1</label>
    </ligand>
</feature>
<feature type="binding site" evidence="1">
    <location>
        <position position="139"/>
    </location>
    <ligand>
        <name>Mg(2+)</name>
        <dbReference type="ChEBI" id="CHEBI:18420"/>
        <label>2</label>
    </ligand>
</feature>
<feature type="binding site" evidence="1">
    <location>
        <position position="143"/>
    </location>
    <ligand>
        <name>Mg(2+)</name>
        <dbReference type="ChEBI" id="CHEBI:18420"/>
        <label>1</label>
    </ligand>
</feature>
<feature type="binding site" evidence="1">
    <location>
        <position position="143"/>
    </location>
    <ligand>
        <name>Mg(2+)</name>
        <dbReference type="ChEBI" id="CHEBI:18420"/>
        <label>2</label>
    </ligand>
</feature>
<feature type="binding site" evidence="1">
    <location>
        <position position="148"/>
    </location>
    <ligand>
        <name>substrate</name>
    </ligand>
</feature>
<feature type="binding site" evidence="1">
    <location>
        <position position="233"/>
    </location>
    <ligand>
        <name>substrate</name>
    </ligand>
</feature>
<feature type="binding site" evidence="1">
    <location>
        <position position="234"/>
    </location>
    <ligand>
        <name>substrate</name>
    </ligand>
</feature>
<feature type="binding site" evidence="1">
    <location>
        <position position="264"/>
    </location>
    <ligand>
        <name>substrate</name>
    </ligand>
</feature>
<feature type="binding site" evidence="1">
    <location>
        <position position="271"/>
    </location>
    <ligand>
        <name>substrate</name>
    </ligand>
</feature>
<feature type="binding site" evidence="1">
    <location>
        <position position="281"/>
    </location>
    <ligand>
        <name>substrate</name>
    </ligand>
</feature>
<feature type="glycosylation site" description="N-linked (GlcNAc...) asparagine" evidence="3">
    <location>
        <position position="67"/>
    </location>
</feature>
<feature type="glycosylation site" description="N-linked (GlcNAc...) asparagine" evidence="3">
    <location>
        <position position="150"/>
    </location>
</feature>
<gene>
    <name evidence="8" type="primary">idtC</name>
</gene>